<accession>B8EP09</accession>
<protein>
    <recommendedName>
        <fullName evidence="1">Polyribonucleotide nucleotidyltransferase</fullName>
        <ecNumber evidence="1">2.7.7.8</ecNumber>
    </recommendedName>
    <alternativeName>
        <fullName evidence="1">Polynucleotide phosphorylase</fullName>
        <shortName evidence="1">PNPase</shortName>
    </alternativeName>
</protein>
<name>PNP_METSB</name>
<gene>
    <name evidence="1" type="primary">pnp</name>
    <name type="ordered locus">Msil_0268</name>
</gene>
<organism>
    <name type="scientific">Methylocella silvestris (strain DSM 15510 / CIP 108128 / LMG 27833 / NCIMB 13906 / BL2)</name>
    <dbReference type="NCBI Taxonomy" id="395965"/>
    <lineage>
        <taxon>Bacteria</taxon>
        <taxon>Pseudomonadati</taxon>
        <taxon>Pseudomonadota</taxon>
        <taxon>Alphaproteobacteria</taxon>
        <taxon>Hyphomicrobiales</taxon>
        <taxon>Beijerinckiaceae</taxon>
        <taxon>Methylocella</taxon>
    </lineage>
</organism>
<comment type="function">
    <text evidence="1">Involved in mRNA degradation. Catalyzes the phosphorolysis of single-stranded polyribonucleotides processively in the 3'- to 5'-direction.</text>
</comment>
<comment type="catalytic activity">
    <reaction evidence="1">
        <text>RNA(n+1) + phosphate = RNA(n) + a ribonucleoside 5'-diphosphate</text>
        <dbReference type="Rhea" id="RHEA:22096"/>
        <dbReference type="Rhea" id="RHEA-COMP:14527"/>
        <dbReference type="Rhea" id="RHEA-COMP:17342"/>
        <dbReference type="ChEBI" id="CHEBI:43474"/>
        <dbReference type="ChEBI" id="CHEBI:57930"/>
        <dbReference type="ChEBI" id="CHEBI:140395"/>
        <dbReference type="EC" id="2.7.7.8"/>
    </reaction>
</comment>
<comment type="cofactor">
    <cofactor evidence="1">
        <name>Mg(2+)</name>
        <dbReference type="ChEBI" id="CHEBI:18420"/>
    </cofactor>
</comment>
<comment type="subcellular location">
    <subcellularLocation>
        <location evidence="1">Cytoplasm</location>
    </subcellularLocation>
</comment>
<comment type="similarity">
    <text evidence="1">Belongs to the polyribonucleotide nucleotidyltransferase family.</text>
</comment>
<feature type="chain" id="PRO_1000185745" description="Polyribonucleotide nucleotidyltransferase">
    <location>
        <begin position="1"/>
        <end position="714"/>
    </location>
</feature>
<feature type="domain" description="KH" evidence="1">
    <location>
        <begin position="554"/>
        <end position="613"/>
    </location>
</feature>
<feature type="domain" description="S1 motif" evidence="1">
    <location>
        <begin position="623"/>
        <end position="691"/>
    </location>
</feature>
<feature type="binding site" evidence="1">
    <location>
        <position position="487"/>
    </location>
    <ligand>
        <name>Mg(2+)</name>
        <dbReference type="ChEBI" id="CHEBI:18420"/>
    </ligand>
</feature>
<feature type="binding site" evidence="1">
    <location>
        <position position="493"/>
    </location>
    <ligand>
        <name>Mg(2+)</name>
        <dbReference type="ChEBI" id="CHEBI:18420"/>
    </ligand>
</feature>
<proteinExistence type="inferred from homology"/>
<dbReference type="EC" id="2.7.7.8" evidence="1"/>
<dbReference type="EMBL" id="CP001280">
    <property type="protein sequence ID" value="ACK49247.1"/>
    <property type="molecule type" value="Genomic_DNA"/>
</dbReference>
<dbReference type="RefSeq" id="WP_012589317.1">
    <property type="nucleotide sequence ID" value="NC_011666.1"/>
</dbReference>
<dbReference type="SMR" id="B8EP09"/>
<dbReference type="STRING" id="395965.Msil_0268"/>
<dbReference type="KEGG" id="msl:Msil_0268"/>
<dbReference type="eggNOG" id="COG1185">
    <property type="taxonomic scope" value="Bacteria"/>
</dbReference>
<dbReference type="HOGENOM" id="CLU_004217_2_2_5"/>
<dbReference type="OrthoDB" id="9804305at2"/>
<dbReference type="Proteomes" id="UP000002257">
    <property type="component" value="Chromosome"/>
</dbReference>
<dbReference type="GO" id="GO:0005829">
    <property type="term" value="C:cytosol"/>
    <property type="evidence" value="ECO:0007669"/>
    <property type="project" value="TreeGrafter"/>
</dbReference>
<dbReference type="GO" id="GO:0000175">
    <property type="term" value="F:3'-5'-RNA exonuclease activity"/>
    <property type="evidence" value="ECO:0007669"/>
    <property type="project" value="TreeGrafter"/>
</dbReference>
<dbReference type="GO" id="GO:0000287">
    <property type="term" value="F:magnesium ion binding"/>
    <property type="evidence" value="ECO:0007669"/>
    <property type="project" value="UniProtKB-UniRule"/>
</dbReference>
<dbReference type="GO" id="GO:0004654">
    <property type="term" value="F:polyribonucleotide nucleotidyltransferase activity"/>
    <property type="evidence" value="ECO:0007669"/>
    <property type="project" value="UniProtKB-UniRule"/>
</dbReference>
<dbReference type="GO" id="GO:0003723">
    <property type="term" value="F:RNA binding"/>
    <property type="evidence" value="ECO:0007669"/>
    <property type="project" value="UniProtKB-UniRule"/>
</dbReference>
<dbReference type="GO" id="GO:0006402">
    <property type="term" value="P:mRNA catabolic process"/>
    <property type="evidence" value="ECO:0007669"/>
    <property type="project" value="UniProtKB-UniRule"/>
</dbReference>
<dbReference type="GO" id="GO:0006396">
    <property type="term" value="P:RNA processing"/>
    <property type="evidence" value="ECO:0007669"/>
    <property type="project" value="InterPro"/>
</dbReference>
<dbReference type="CDD" id="cd02393">
    <property type="entry name" value="KH-I_PNPase"/>
    <property type="match status" value="1"/>
</dbReference>
<dbReference type="CDD" id="cd11363">
    <property type="entry name" value="RNase_PH_PNPase_1"/>
    <property type="match status" value="1"/>
</dbReference>
<dbReference type="CDD" id="cd11364">
    <property type="entry name" value="RNase_PH_PNPase_2"/>
    <property type="match status" value="1"/>
</dbReference>
<dbReference type="CDD" id="cd04472">
    <property type="entry name" value="S1_PNPase"/>
    <property type="match status" value="1"/>
</dbReference>
<dbReference type="FunFam" id="2.40.50.140:FF:000107">
    <property type="entry name" value="Polyribonucleotide nucleotidyltransferase"/>
    <property type="match status" value="1"/>
</dbReference>
<dbReference type="FunFam" id="3.30.1370.10:FF:000001">
    <property type="entry name" value="Polyribonucleotide nucleotidyltransferase"/>
    <property type="match status" value="1"/>
</dbReference>
<dbReference type="FunFam" id="3.30.230.70:FF:000001">
    <property type="entry name" value="Polyribonucleotide nucleotidyltransferase"/>
    <property type="match status" value="1"/>
</dbReference>
<dbReference type="FunFam" id="3.30.230.70:FF:000002">
    <property type="entry name" value="Polyribonucleotide nucleotidyltransferase"/>
    <property type="match status" value="1"/>
</dbReference>
<dbReference type="Gene3D" id="3.30.230.70">
    <property type="entry name" value="GHMP Kinase, N-terminal domain"/>
    <property type="match status" value="2"/>
</dbReference>
<dbReference type="Gene3D" id="3.30.1370.10">
    <property type="entry name" value="K Homology domain, type 1"/>
    <property type="match status" value="1"/>
</dbReference>
<dbReference type="Gene3D" id="2.40.50.140">
    <property type="entry name" value="Nucleic acid-binding proteins"/>
    <property type="match status" value="1"/>
</dbReference>
<dbReference type="HAMAP" id="MF_01595">
    <property type="entry name" value="PNPase"/>
    <property type="match status" value="1"/>
</dbReference>
<dbReference type="InterPro" id="IPR001247">
    <property type="entry name" value="ExoRNase_PH_dom1"/>
</dbReference>
<dbReference type="InterPro" id="IPR015847">
    <property type="entry name" value="ExoRNase_PH_dom2"/>
</dbReference>
<dbReference type="InterPro" id="IPR036345">
    <property type="entry name" value="ExoRNase_PH_dom2_sf"/>
</dbReference>
<dbReference type="InterPro" id="IPR004087">
    <property type="entry name" value="KH_dom"/>
</dbReference>
<dbReference type="InterPro" id="IPR004088">
    <property type="entry name" value="KH_dom_type_1"/>
</dbReference>
<dbReference type="InterPro" id="IPR036612">
    <property type="entry name" value="KH_dom_type_1_sf"/>
</dbReference>
<dbReference type="InterPro" id="IPR012340">
    <property type="entry name" value="NA-bd_OB-fold"/>
</dbReference>
<dbReference type="InterPro" id="IPR012162">
    <property type="entry name" value="PNPase"/>
</dbReference>
<dbReference type="InterPro" id="IPR027408">
    <property type="entry name" value="PNPase/RNase_PH_dom_sf"/>
</dbReference>
<dbReference type="InterPro" id="IPR015848">
    <property type="entry name" value="PNPase_PH_RNA-bd_bac/org-type"/>
</dbReference>
<dbReference type="InterPro" id="IPR020568">
    <property type="entry name" value="Ribosomal_Su5_D2-typ_SF"/>
</dbReference>
<dbReference type="InterPro" id="IPR003029">
    <property type="entry name" value="S1_domain"/>
</dbReference>
<dbReference type="NCBIfam" id="TIGR03591">
    <property type="entry name" value="polynuc_phos"/>
    <property type="match status" value="1"/>
</dbReference>
<dbReference type="NCBIfam" id="NF008805">
    <property type="entry name" value="PRK11824.1"/>
    <property type="match status" value="1"/>
</dbReference>
<dbReference type="PANTHER" id="PTHR11252">
    <property type="entry name" value="POLYRIBONUCLEOTIDE NUCLEOTIDYLTRANSFERASE"/>
    <property type="match status" value="1"/>
</dbReference>
<dbReference type="PANTHER" id="PTHR11252:SF0">
    <property type="entry name" value="POLYRIBONUCLEOTIDE NUCLEOTIDYLTRANSFERASE 1, MITOCHONDRIAL"/>
    <property type="match status" value="1"/>
</dbReference>
<dbReference type="Pfam" id="PF00013">
    <property type="entry name" value="KH_1"/>
    <property type="match status" value="1"/>
</dbReference>
<dbReference type="Pfam" id="PF03726">
    <property type="entry name" value="PNPase"/>
    <property type="match status" value="1"/>
</dbReference>
<dbReference type="Pfam" id="PF01138">
    <property type="entry name" value="RNase_PH"/>
    <property type="match status" value="2"/>
</dbReference>
<dbReference type="Pfam" id="PF03725">
    <property type="entry name" value="RNase_PH_C"/>
    <property type="match status" value="2"/>
</dbReference>
<dbReference type="Pfam" id="PF00575">
    <property type="entry name" value="S1"/>
    <property type="match status" value="1"/>
</dbReference>
<dbReference type="PIRSF" id="PIRSF005499">
    <property type="entry name" value="PNPase"/>
    <property type="match status" value="1"/>
</dbReference>
<dbReference type="SMART" id="SM00322">
    <property type="entry name" value="KH"/>
    <property type="match status" value="1"/>
</dbReference>
<dbReference type="SMART" id="SM00316">
    <property type="entry name" value="S1"/>
    <property type="match status" value="1"/>
</dbReference>
<dbReference type="SUPFAM" id="SSF54791">
    <property type="entry name" value="Eukaryotic type KH-domain (KH-domain type I)"/>
    <property type="match status" value="1"/>
</dbReference>
<dbReference type="SUPFAM" id="SSF50249">
    <property type="entry name" value="Nucleic acid-binding proteins"/>
    <property type="match status" value="1"/>
</dbReference>
<dbReference type="SUPFAM" id="SSF55666">
    <property type="entry name" value="Ribonuclease PH domain 2-like"/>
    <property type="match status" value="2"/>
</dbReference>
<dbReference type="SUPFAM" id="SSF54211">
    <property type="entry name" value="Ribosomal protein S5 domain 2-like"/>
    <property type="match status" value="2"/>
</dbReference>
<dbReference type="PROSITE" id="PS50084">
    <property type="entry name" value="KH_TYPE_1"/>
    <property type="match status" value="1"/>
</dbReference>
<dbReference type="PROSITE" id="PS50126">
    <property type="entry name" value="S1"/>
    <property type="match status" value="1"/>
</dbReference>
<sequence>MFEIHREELDWAGRKLTLETGRIARQADGAVLATYGETTVLATVVSARTPKPGIDFFPLTVNYQEKAFAAGRIPGGYFKREGRPSEKETLVSRLIDRPIRPLFPEGYRNDTQVVVTVLSHDLENDPDILALVATSAALTISGIPFMGPVGGARVGYINGALKLNPTVDELKESALDLVVAGTGDAVLMVESEAKELSETLMLEAVMTGHRGFQPVIDAIIRLAEKAAKEPRELAVADKAEVEAAVRDIAEGELREAYKITAKQERYKAVDAVKAKVALALFPEDAEPRFSKEKVAEAFHDLQAKVVRWNILDLGVRIDGRDLKTVRPILAEVGILPRAHGSALFTRGETQALVVATLGTGEDEQFVDSLEGTYKERFLLHYNFPPYSVGETGRMGSPGRREIGHGKLAWRAVRPMLPTAAEFPYTIRIVSEITESNGSSSMATVCGSSLALMDAGVPLKRPTAGIAMGLILEGERFAVLSDILGDEDHLGDMDFKVAGTEEGVTSLQMDIKVAGITEEIMKVALDQAKGGRLHILGEMSKALTGARAELGEFAPRIETLKIPTDKIREVIGTGGKVIREIVEKTGAKINIEDDGTVKVASSDGNSIKAAIAWIKSIANDPEVGQIYEGTVVKVVDFGAFVNFFGSKDGLVHISQLAKGRVAKSSDVVKEGEKVKVKLLGFDDRGKVRLSMRYVDQETGEDLEAKEKAEQQASVD</sequence>
<reference key="1">
    <citation type="journal article" date="2010" name="J. Bacteriol.">
        <title>Complete genome sequence of the aerobic facultative methanotroph Methylocella silvestris BL2.</title>
        <authorList>
            <person name="Chen Y."/>
            <person name="Crombie A."/>
            <person name="Rahman M.T."/>
            <person name="Dedysh S.N."/>
            <person name="Liesack W."/>
            <person name="Stott M.B."/>
            <person name="Alam M."/>
            <person name="Theisen A.R."/>
            <person name="Murrell J.C."/>
            <person name="Dunfield P.F."/>
        </authorList>
    </citation>
    <scope>NUCLEOTIDE SEQUENCE [LARGE SCALE GENOMIC DNA]</scope>
    <source>
        <strain>DSM 15510 / CIP 108128 / LMG 27833 / NCIMB 13906 / BL2</strain>
    </source>
</reference>
<evidence type="ECO:0000255" key="1">
    <source>
        <dbReference type="HAMAP-Rule" id="MF_01595"/>
    </source>
</evidence>
<keyword id="KW-0963">Cytoplasm</keyword>
<keyword id="KW-0460">Magnesium</keyword>
<keyword id="KW-0479">Metal-binding</keyword>
<keyword id="KW-0548">Nucleotidyltransferase</keyword>
<keyword id="KW-1185">Reference proteome</keyword>
<keyword id="KW-0694">RNA-binding</keyword>
<keyword id="KW-0808">Transferase</keyword>